<keyword id="KW-0342">GTP-binding</keyword>
<keyword id="KW-0378">Hydrolase</keyword>
<keyword id="KW-0479">Metal-binding</keyword>
<keyword id="KW-0547">Nucleotide-binding</keyword>
<keyword id="KW-0554">One-carbon metabolism</keyword>
<keyword id="KW-0862">Zinc</keyword>
<reference key="1">
    <citation type="journal article" date="2004" name="J. Bacteriol.">
        <title>Complete genome sequence of Rickettsia typhi and comparison with sequences of other Rickettsiae.</title>
        <authorList>
            <person name="McLeod M.P."/>
            <person name="Qin X."/>
            <person name="Karpathy S.E."/>
            <person name="Gioia J."/>
            <person name="Highlander S.K."/>
            <person name="Fox G.E."/>
            <person name="McNeill T.Z."/>
            <person name="Jiang H."/>
            <person name="Muzny D."/>
            <person name="Jacob L.S."/>
            <person name="Hawes A.C."/>
            <person name="Sodergren E."/>
            <person name="Gill R."/>
            <person name="Hume J."/>
            <person name="Morgan M."/>
            <person name="Fan G."/>
            <person name="Amin A.G."/>
            <person name="Gibbs R.A."/>
            <person name="Hong C."/>
            <person name="Yu X.-J."/>
            <person name="Walker D.H."/>
            <person name="Weinstock G.M."/>
        </authorList>
    </citation>
    <scope>NUCLEOTIDE SEQUENCE [LARGE SCALE GENOMIC DNA]</scope>
    <source>
        <strain>ATCC VR-144 / Wilmington</strain>
    </source>
</reference>
<accession>Q68WZ4</accession>
<organism>
    <name type="scientific">Rickettsia typhi (strain ATCC VR-144 / Wilmington)</name>
    <dbReference type="NCBI Taxonomy" id="257363"/>
    <lineage>
        <taxon>Bacteria</taxon>
        <taxon>Pseudomonadati</taxon>
        <taxon>Pseudomonadota</taxon>
        <taxon>Alphaproteobacteria</taxon>
        <taxon>Rickettsiales</taxon>
        <taxon>Rickettsiaceae</taxon>
        <taxon>Rickettsieae</taxon>
        <taxon>Rickettsia</taxon>
        <taxon>typhus group</taxon>
    </lineage>
</organism>
<gene>
    <name evidence="2" type="primary">folE</name>
    <name type="ordered locus">RT0371</name>
</gene>
<sequence>MNKPTREEAKEAVRTLLRFIGEDPTREGLLKTPDRVINSYMEIFSGYGKDVQEILNTKFYDTYNFQDLISLEGIKFTSFCEHHILPFNGTVHIAYIPDNCIIGVSKLARIVNIFSRRLQIQEKMTVQIAESIQESLKPLGVAIKISAFHSCMSMRGVMHDNSVMNTMYYTGIFAEQQKYRHEFLNFIAKR</sequence>
<dbReference type="EC" id="3.5.4.16" evidence="2"/>
<dbReference type="EMBL" id="AE017197">
    <property type="protein sequence ID" value="AAU03848.1"/>
    <property type="molecule type" value="Genomic_DNA"/>
</dbReference>
<dbReference type="RefSeq" id="WP_011190832.1">
    <property type="nucleotide sequence ID" value="NC_006142.1"/>
</dbReference>
<dbReference type="SMR" id="Q68WZ4"/>
<dbReference type="KEGG" id="rty:RT0371"/>
<dbReference type="eggNOG" id="COG0302">
    <property type="taxonomic scope" value="Bacteria"/>
</dbReference>
<dbReference type="HOGENOM" id="CLU_049768_3_1_5"/>
<dbReference type="OrthoDB" id="9801207at2"/>
<dbReference type="UniPathway" id="UPA00848">
    <property type="reaction ID" value="UER00151"/>
</dbReference>
<dbReference type="Proteomes" id="UP000000604">
    <property type="component" value="Chromosome"/>
</dbReference>
<dbReference type="GO" id="GO:0005737">
    <property type="term" value="C:cytoplasm"/>
    <property type="evidence" value="ECO:0007669"/>
    <property type="project" value="TreeGrafter"/>
</dbReference>
<dbReference type="GO" id="GO:0005525">
    <property type="term" value="F:GTP binding"/>
    <property type="evidence" value="ECO:0007669"/>
    <property type="project" value="UniProtKB-KW"/>
</dbReference>
<dbReference type="GO" id="GO:0003934">
    <property type="term" value="F:GTP cyclohydrolase I activity"/>
    <property type="evidence" value="ECO:0007669"/>
    <property type="project" value="UniProtKB-UniRule"/>
</dbReference>
<dbReference type="GO" id="GO:0008270">
    <property type="term" value="F:zinc ion binding"/>
    <property type="evidence" value="ECO:0007669"/>
    <property type="project" value="UniProtKB-UniRule"/>
</dbReference>
<dbReference type="GO" id="GO:0006730">
    <property type="term" value="P:one-carbon metabolic process"/>
    <property type="evidence" value="ECO:0007669"/>
    <property type="project" value="UniProtKB-UniRule"/>
</dbReference>
<dbReference type="GO" id="GO:0006729">
    <property type="term" value="P:tetrahydrobiopterin biosynthetic process"/>
    <property type="evidence" value="ECO:0007669"/>
    <property type="project" value="TreeGrafter"/>
</dbReference>
<dbReference type="GO" id="GO:0046654">
    <property type="term" value="P:tetrahydrofolate biosynthetic process"/>
    <property type="evidence" value="ECO:0007669"/>
    <property type="project" value="UniProtKB-UniRule"/>
</dbReference>
<dbReference type="FunFam" id="1.10.286.10:FF:000001">
    <property type="entry name" value="GTP cyclohydrolase 1"/>
    <property type="match status" value="1"/>
</dbReference>
<dbReference type="FunFam" id="3.30.1130.10:FF:000001">
    <property type="entry name" value="GTP cyclohydrolase 1"/>
    <property type="match status" value="1"/>
</dbReference>
<dbReference type="Gene3D" id="1.10.286.10">
    <property type="match status" value="1"/>
</dbReference>
<dbReference type="Gene3D" id="3.30.1130.10">
    <property type="match status" value="1"/>
</dbReference>
<dbReference type="HAMAP" id="MF_00223">
    <property type="entry name" value="FolE"/>
    <property type="match status" value="1"/>
</dbReference>
<dbReference type="InterPro" id="IPR043133">
    <property type="entry name" value="GTP-CH-I_C/QueF"/>
</dbReference>
<dbReference type="InterPro" id="IPR043134">
    <property type="entry name" value="GTP-CH-I_N"/>
</dbReference>
<dbReference type="InterPro" id="IPR001474">
    <property type="entry name" value="GTP_CycHdrlase_I"/>
</dbReference>
<dbReference type="InterPro" id="IPR018234">
    <property type="entry name" value="GTP_CycHdrlase_I_CS"/>
</dbReference>
<dbReference type="InterPro" id="IPR020602">
    <property type="entry name" value="GTP_CycHdrlase_I_dom"/>
</dbReference>
<dbReference type="NCBIfam" id="TIGR00063">
    <property type="entry name" value="folE"/>
    <property type="match status" value="1"/>
</dbReference>
<dbReference type="NCBIfam" id="NF006825">
    <property type="entry name" value="PRK09347.1-2"/>
    <property type="match status" value="1"/>
</dbReference>
<dbReference type="NCBIfam" id="NF006826">
    <property type="entry name" value="PRK09347.1-3"/>
    <property type="match status" value="1"/>
</dbReference>
<dbReference type="PANTHER" id="PTHR11109:SF7">
    <property type="entry name" value="GTP CYCLOHYDROLASE 1"/>
    <property type="match status" value="1"/>
</dbReference>
<dbReference type="PANTHER" id="PTHR11109">
    <property type="entry name" value="GTP CYCLOHYDROLASE I"/>
    <property type="match status" value="1"/>
</dbReference>
<dbReference type="Pfam" id="PF01227">
    <property type="entry name" value="GTP_cyclohydroI"/>
    <property type="match status" value="1"/>
</dbReference>
<dbReference type="SUPFAM" id="SSF55620">
    <property type="entry name" value="Tetrahydrobiopterin biosynthesis enzymes-like"/>
    <property type="match status" value="1"/>
</dbReference>
<dbReference type="PROSITE" id="PS00859">
    <property type="entry name" value="GTP_CYCLOHYDROL_1_1"/>
    <property type="match status" value="1"/>
</dbReference>
<dbReference type="PROSITE" id="PS00860">
    <property type="entry name" value="GTP_CYCLOHYDROL_1_2"/>
    <property type="match status" value="1"/>
</dbReference>
<evidence type="ECO:0000250" key="1"/>
<evidence type="ECO:0000255" key="2">
    <source>
        <dbReference type="HAMAP-Rule" id="MF_00223"/>
    </source>
</evidence>
<proteinExistence type="inferred from homology"/>
<feature type="chain" id="PRO_0000278031" description="GTP cyclohydrolase 1">
    <location>
        <begin position="1"/>
        <end position="190"/>
    </location>
</feature>
<feature type="binding site" evidence="2">
    <location>
        <position position="80"/>
    </location>
    <ligand>
        <name>Zn(2+)</name>
        <dbReference type="ChEBI" id="CHEBI:29105"/>
    </ligand>
</feature>
<feature type="binding site" evidence="2">
    <location>
        <position position="83"/>
    </location>
    <ligand>
        <name>Zn(2+)</name>
        <dbReference type="ChEBI" id="CHEBI:29105"/>
    </ligand>
</feature>
<feature type="binding site" evidence="2">
    <location>
        <position position="151"/>
    </location>
    <ligand>
        <name>Zn(2+)</name>
        <dbReference type="ChEBI" id="CHEBI:29105"/>
    </ligand>
</feature>
<protein>
    <recommendedName>
        <fullName evidence="2">GTP cyclohydrolase 1</fullName>
        <ecNumber evidence="2">3.5.4.16</ecNumber>
    </recommendedName>
    <alternativeName>
        <fullName evidence="2">GTP cyclohydrolase I</fullName>
        <shortName evidence="2">GTP-CH-I</shortName>
    </alternativeName>
</protein>
<name>GCH1_RICTY</name>
<comment type="catalytic activity">
    <reaction evidence="2">
        <text>GTP + H2O = 7,8-dihydroneopterin 3'-triphosphate + formate + H(+)</text>
        <dbReference type="Rhea" id="RHEA:17473"/>
        <dbReference type="ChEBI" id="CHEBI:15377"/>
        <dbReference type="ChEBI" id="CHEBI:15378"/>
        <dbReference type="ChEBI" id="CHEBI:15740"/>
        <dbReference type="ChEBI" id="CHEBI:37565"/>
        <dbReference type="ChEBI" id="CHEBI:58462"/>
        <dbReference type="EC" id="3.5.4.16"/>
    </reaction>
</comment>
<comment type="pathway">
    <text evidence="2">Cofactor biosynthesis; 7,8-dihydroneopterin triphosphate biosynthesis; 7,8-dihydroneopterin triphosphate from GTP: step 1/1.</text>
</comment>
<comment type="subunit">
    <text evidence="1">Toroid-shaped homodecamer, composed of two pentamers of five dimers.</text>
</comment>
<comment type="similarity">
    <text evidence="2">Belongs to the GTP cyclohydrolase I family.</text>
</comment>